<protein>
    <recommendedName>
        <fullName>Truncated plaque-size/host range protein</fullName>
    </recommendedName>
    <alternativeName>
        <fullName>Protein B5</fullName>
    </alternativeName>
</protein>
<reference key="1">
    <citation type="journal article" date="1991" name="Virology">
        <title>Regulation of plaque size and host range by a vaccinia virus gene related to complement system proteins.</title>
        <authorList>
            <person name="Takahashi-Nishimaki F."/>
            <person name="Funahashi S."/>
            <person name="Miki K."/>
            <person name="Hashizume S."/>
            <person name="Sugimoto M."/>
        </authorList>
    </citation>
    <scope>NUCLEOTIDE SEQUENCE [GENOMIC DNA]</scope>
</reference>
<sequence>MKTISVVTLLCVLPAVVYSTCTVPTMNNAKLTSTETSFNDKQKVTFTCDQGYHSLDPNAVCETDKWKYENPCKKMCTVSDYVSELYDKPLYK</sequence>
<gene>
    <name type="primary">PS/HR</name>
    <name type="ORF">B5R</name>
</gene>
<feature type="signal peptide" evidence="1">
    <location>
        <begin position="1"/>
        <end position="17"/>
    </location>
</feature>
<feature type="chain" id="PRO_0000006022" description="Truncated plaque-size/host range protein">
    <location>
        <begin position="18"/>
        <end position="92"/>
    </location>
</feature>
<feature type="domain" description="Sushi" evidence="2">
    <location>
        <begin position="19"/>
        <end position="74"/>
    </location>
</feature>
<feature type="disulfide bond" evidence="2">
    <location>
        <begin position="21"/>
        <end position="61"/>
    </location>
</feature>
<feature type="disulfide bond" evidence="2">
    <location>
        <begin position="48"/>
        <end position="72"/>
    </location>
</feature>
<accession>P24284</accession>
<name>VB05_VACC8</name>
<organism>
    <name type="scientific">Vaccinia virus (strain LC16m8)</name>
    <name type="common">VACV</name>
    <dbReference type="NCBI Taxonomy" id="10248"/>
    <lineage>
        <taxon>Viruses</taxon>
        <taxon>Varidnaviria</taxon>
        <taxon>Bamfordvirae</taxon>
        <taxon>Nucleocytoviricota</taxon>
        <taxon>Pokkesviricetes</taxon>
        <taxon>Chitovirales</taxon>
        <taxon>Poxviridae</taxon>
        <taxon>Chordopoxvirinae</taxon>
        <taxon>Orthopoxvirus</taxon>
        <taxon>Vaccinia virus</taxon>
    </lineage>
</organism>
<organismHost>
    <name type="scientific">Homo sapiens</name>
    <name type="common">Human</name>
    <dbReference type="NCBI Taxonomy" id="9606"/>
</organismHost>
<dbReference type="EMBL" id="M55435">
    <property type="protein sequence ID" value="AAA48317.1"/>
    <property type="molecule type" value="Genomic_DNA"/>
</dbReference>
<dbReference type="SMR" id="P24284"/>
<dbReference type="CDD" id="cd00033">
    <property type="entry name" value="CCP"/>
    <property type="match status" value="1"/>
</dbReference>
<dbReference type="Gene3D" id="2.10.70.10">
    <property type="entry name" value="Complement Module, domain 1"/>
    <property type="match status" value="1"/>
</dbReference>
<dbReference type="InterPro" id="IPR035976">
    <property type="entry name" value="Sushi/SCR/CCP_sf"/>
</dbReference>
<dbReference type="InterPro" id="IPR000436">
    <property type="entry name" value="Sushi_SCR_CCP_dom"/>
</dbReference>
<dbReference type="Pfam" id="PF00084">
    <property type="entry name" value="Sushi"/>
    <property type="match status" value="1"/>
</dbReference>
<dbReference type="SMART" id="SM00032">
    <property type="entry name" value="CCP"/>
    <property type="match status" value="1"/>
</dbReference>
<dbReference type="SUPFAM" id="SSF57535">
    <property type="entry name" value="Complement control module/SCR domain"/>
    <property type="match status" value="1"/>
</dbReference>
<dbReference type="PROSITE" id="PS50923">
    <property type="entry name" value="SUSHI"/>
    <property type="match status" value="1"/>
</dbReference>
<evidence type="ECO:0000255" key="1"/>
<evidence type="ECO:0000255" key="2">
    <source>
        <dbReference type="PROSITE-ProRule" id="PRU00302"/>
    </source>
</evidence>
<evidence type="ECO:0000305" key="3"/>
<comment type="function">
    <text>Regulation of plaque size and host range. In this strain the truncated ps/hr protein is probably not functional.</text>
</comment>
<comment type="miscellaneous">
    <text>The small-plaque-forming LC16m8 strain is not able to proliferate in vero (YTV) cells.</text>
</comment>
<comment type="similarity">
    <text evidence="3">Belongs to the receptors of complement activation (RCA) family.</text>
</comment>
<keyword id="KW-1015">Disulfide bond</keyword>
<keyword id="KW-0732">Signal</keyword>
<keyword id="KW-0768">Sushi</keyword>
<proteinExistence type="inferred from homology"/>